<gene>
    <name evidence="1" type="primary">dtd</name>
    <name type="ordered locus">EcSMS35_4272</name>
</gene>
<sequence>MIALIQRVTRASVTVEGEVTGEIGAGLLVLLGVEKDDDEQKANRLCERVLGYRIFSDAEGKMNLNVQQAGGSVLVVSQFTLAADTERGMRPSFSKGASPDRAEALYDYFVERCRQQEMNTQTGRFAADMQVSLVNDGPVTFWLQV</sequence>
<proteinExistence type="inferred from homology"/>
<feature type="chain" id="PRO_1000127530" description="D-aminoacyl-tRNA deacylase">
    <location>
        <begin position="1"/>
        <end position="145"/>
    </location>
</feature>
<feature type="short sequence motif" description="Gly-cisPro motif, important for rejection of L-amino acids" evidence="1">
    <location>
        <begin position="137"/>
        <end position="138"/>
    </location>
</feature>
<accession>B1LMS1</accession>
<reference key="1">
    <citation type="journal article" date="2008" name="J. Bacteriol.">
        <title>Insights into the environmental resistance gene pool from the genome sequence of the multidrug-resistant environmental isolate Escherichia coli SMS-3-5.</title>
        <authorList>
            <person name="Fricke W.F."/>
            <person name="Wright M.S."/>
            <person name="Lindell A.H."/>
            <person name="Harkins D.M."/>
            <person name="Baker-Austin C."/>
            <person name="Ravel J."/>
            <person name="Stepanauskas R."/>
        </authorList>
    </citation>
    <scope>NUCLEOTIDE SEQUENCE [LARGE SCALE GENOMIC DNA]</scope>
    <source>
        <strain>SMS-3-5 / SECEC</strain>
    </source>
</reference>
<evidence type="ECO:0000255" key="1">
    <source>
        <dbReference type="HAMAP-Rule" id="MF_00518"/>
    </source>
</evidence>
<organism>
    <name type="scientific">Escherichia coli (strain SMS-3-5 / SECEC)</name>
    <dbReference type="NCBI Taxonomy" id="439855"/>
    <lineage>
        <taxon>Bacteria</taxon>
        <taxon>Pseudomonadati</taxon>
        <taxon>Pseudomonadota</taxon>
        <taxon>Gammaproteobacteria</taxon>
        <taxon>Enterobacterales</taxon>
        <taxon>Enterobacteriaceae</taxon>
        <taxon>Escherichia</taxon>
    </lineage>
</organism>
<dbReference type="EC" id="3.1.1.96" evidence="1"/>
<dbReference type="EMBL" id="CP000970">
    <property type="protein sequence ID" value="ACB16039.1"/>
    <property type="molecule type" value="Genomic_DNA"/>
</dbReference>
<dbReference type="RefSeq" id="WP_000560983.1">
    <property type="nucleotide sequence ID" value="NC_010498.1"/>
</dbReference>
<dbReference type="SMR" id="B1LMS1"/>
<dbReference type="GeneID" id="93778051"/>
<dbReference type="KEGG" id="ecm:EcSMS35_4272"/>
<dbReference type="HOGENOM" id="CLU_076901_1_0_6"/>
<dbReference type="Proteomes" id="UP000007011">
    <property type="component" value="Chromosome"/>
</dbReference>
<dbReference type="GO" id="GO:0005737">
    <property type="term" value="C:cytoplasm"/>
    <property type="evidence" value="ECO:0007669"/>
    <property type="project" value="UniProtKB-SubCell"/>
</dbReference>
<dbReference type="GO" id="GO:0051500">
    <property type="term" value="F:D-tyrosyl-tRNA(Tyr) deacylase activity"/>
    <property type="evidence" value="ECO:0007669"/>
    <property type="project" value="TreeGrafter"/>
</dbReference>
<dbReference type="GO" id="GO:0106026">
    <property type="term" value="F:Gly-tRNA(Ala) deacylase activity"/>
    <property type="evidence" value="ECO:0007669"/>
    <property type="project" value="UniProtKB-UniRule"/>
</dbReference>
<dbReference type="GO" id="GO:0043908">
    <property type="term" value="F:Ser(Gly)-tRNA(Ala) hydrolase activity"/>
    <property type="evidence" value="ECO:0007669"/>
    <property type="project" value="UniProtKB-UniRule"/>
</dbReference>
<dbReference type="GO" id="GO:0000049">
    <property type="term" value="F:tRNA binding"/>
    <property type="evidence" value="ECO:0007669"/>
    <property type="project" value="UniProtKB-UniRule"/>
</dbReference>
<dbReference type="GO" id="GO:0019478">
    <property type="term" value="P:D-amino acid catabolic process"/>
    <property type="evidence" value="ECO:0007669"/>
    <property type="project" value="UniProtKB-UniRule"/>
</dbReference>
<dbReference type="CDD" id="cd00563">
    <property type="entry name" value="Dtyr_deacylase"/>
    <property type="match status" value="1"/>
</dbReference>
<dbReference type="FunFam" id="3.50.80.10:FF:000001">
    <property type="entry name" value="D-aminoacyl-tRNA deacylase"/>
    <property type="match status" value="1"/>
</dbReference>
<dbReference type="Gene3D" id="3.50.80.10">
    <property type="entry name" value="D-tyrosyl-tRNA(Tyr) deacylase"/>
    <property type="match status" value="1"/>
</dbReference>
<dbReference type="HAMAP" id="MF_00518">
    <property type="entry name" value="Deacylase_Dtd"/>
    <property type="match status" value="1"/>
</dbReference>
<dbReference type="InterPro" id="IPR003732">
    <property type="entry name" value="Daa-tRNA_deacyls_DTD"/>
</dbReference>
<dbReference type="InterPro" id="IPR023509">
    <property type="entry name" value="DTD-like_sf"/>
</dbReference>
<dbReference type="NCBIfam" id="TIGR00256">
    <property type="entry name" value="D-aminoacyl-tRNA deacylase"/>
    <property type="match status" value="1"/>
</dbReference>
<dbReference type="PANTHER" id="PTHR10472:SF5">
    <property type="entry name" value="D-AMINOACYL-TRNA DEACYLASE 1"/>
    <property type="match status" value="1"/>
</dbReference>
<dbReference type="PANTHER" id="PTHR10472">
    <property type="entry name" value="D-TYROSYL-TRNA TYR DEACYLASE"/>
    <property type="match status" value="1"/>
</dbReference>
<dbReference type="Pfam" id="PF02580">
    <property type="entry name" value="Tyr_Deacylase"/>
    <property type="match status" value="1"/>
</dbReference>
<dbReference type="SUPFAM" id="SSF69500">
    <property type="entry name" value="DTD-like"/>
    <property type="match status" value="1"/>
</dbReference>
<protein>
    <recommendedName>
        <fullName evidence="1">D-aminoacyl-tRNA deacylase</fullName>
        <shortName evidence="1">DTD</shortName>
        <ecNumber evidence="1">3.1.1.96</ecNumber>
    </recommendedName>
    <alternativeName>
        <fullName evidence="1">Gly-tRNA(Ala) deacylase</fullName>
    </alternativeName>
</protein>
<name>DTD_ECOSM</name>
<keyword id="KW-0963">Cytoplasm</keyword>
<keyword id="KW-0378">Hydrolase</keyword>
<keyword id="KW-0694">RNA-binding</keyword>
<keyword id="KW-0820">tRNA-binding</keyword>
<comment type="function">
    <text evidence="1">An aminoacyl-tRNA editing enzyme that deacylates mischarged D-aminoacyl-tRNAs. Also deacylates mischarged glycyl-tRNA(Ala), protecting cells against glycine mischarging by AlaRS. Acts via tRNA-based rather than protein-based catalysis; rejects L-amino acids rather than detecting D-amino acids in the active site. By recycling D-aminoacyl-tRNA to D-amino acids and free tRNA molecules, this enzyme counteracts the toxicity associated with the formation of D-aminoacyl-tRNA entities in vivo and helps enforce protein L-homochirality.</text>
</comment>
<comment type="catalytic activity">
    <reaction evidence="1">
        <text>glycyl-tRNA(Ala) + H2O = tRNA(Ala) + glycine + H(+)</text>
        <dbReference type="Rhea" id="RHEA:53744"/>
        <dbReference type="Rhea" id="RHEA-COMP:9657"/>
        <dbReference type="Rhea" id="RHEA-COMP:13640"/>
        <dbReference type="ChEBI" id="CHEBI:15377"/>
        <dbReference type="ChEBI" id="CHEBI:15378"/>
        <dbReference type="ChEBI" id="CHEBI:57305"/>
        <dbReference type="ChEBI" id="CHEBI:78442"/>
        <dbReference type="ChEBI" id="CHEBI:78522"/>
        <dbReference type="EC" id="3.1.1.96"/>
    </reaction>
</comment>
<comment type="catalytic activity">
    <reaction evidence="1">
        <text>a D-aminoacyl-tRNA + H2O = a tRNA + a D-alpha-amino acid + H(+)</text>
        <dbReference type="Rhea" id="RHEA:13953"/>
        <dbReference type="Rhea" id="RHEA-COMP:10123"/>
        <dbReference type="Rhea" id="RHEA-COMP:10124"/>
        <dbReference type="ChEBI" id="CHEBI:15377"/>
        <dbReference type="ChEBI" id="CHEBI:15378"/>
        <dbReference type="ChEBI" id="CHEBI:59871"/>
        <dbReference type="ChEBI" id="CHEBI:78442"/>
        <dbReference type="ChEBI" id="CHEBI:79333"/>
        <dbReference type="EC" id="3.1.1.96"/>
    </reaction>
</comment>
<comment type="subunit">
    <text evidence="1">Homodimer.</text>
</comment>
<comment type="subcellular location">
    <subcellularLocation>
        <location evidence="1">Cytoplasm</location>
    </subcellularLocation>
</comment>
<comment type="domain">
    <text evidence="1">A Gly-cisPro motif from one monomer fits into the active site of the other monomer to allow specific chiral rejection of L-amino acids.</text>
</comment>
<comment type="similarity">
    <text evidence="1">Belongs to the DTD family.</text>
</comment>